<accession>P01390</accession>
<feature type="chain" id="PRO_0000093552" description="Long neurotoxin 1" evidence="2">
    <location>
        <begin position="1"/>
        <end position="71"/>
    </location>
</feature>
<feature type="disulfide bond" evidence="2">
    <location>
        <begin position="3"/>
        <end position="20"/>
    </location>
</feature>
<feature type="disulfide bond" evidence="2">
    <location>
        <begin position="14"/>
        <end position="41"/>
    </location>
</feature>
<feature type="disulfide bond" evidence="2">
    <location>
        <begin position="26"/>
        <end position="30"/>
    </location>
</feature>
<feature type="disulfide bond" evidence="2">
    <location>
        <begin position="45"/>
        <end position="56"/>
    </location>
</feature>
<feature type="disulfide bond" evidence="2">
    <location>
        <begin position="57"/>
        <end position="62"/>
    </location>
</feature>
<feature type="strand" evidence="6">
    <location>
        <begin position="2"/>
        <end position="5"/>
    </location>
</feature>
<feature type="turn" evidence="6">
    <location>
        <begin position="6"/>
        <end position="9"/>
    </location>
</feature>
<feature type="strand" evidence="6">
    <location>
        <begin position="10"/>
        <end position="13"/>
    </location>
</feature>
<feature type="strand" evidence="6">
    <location>
        <begin position="19"/>
        <end position="25"/>
    </location>
</feature>
<feature type="helix" evidence="6">
    <location>
        <begin position="30"/>
        <end position="33"/>
    </location>
</feature>
<feature type="strand" evidence="6">
    <location>
        <begin position="36"/>
        <end position="44"/>
    </location>
</feature>
<feature type="strand" evidence="6">
    <location>
        <begin position="53"/>
        <end position="57"/>
    </location>
</feature>
<keyword id="KW-0002">3D-structure</keyword>
<keyword id="KW-0008">Acetylcholine receptor inhibiting toxin</keyword>
<keyword id="KW-0903">Direct protein sequencing</keyword>
<keyword id="KW-1015">Disulfide bond</keyword>
<keyword id="KW-0872">Ion channel impairing toxin</keyword>
<keyword id="KW-0528">Neurotoxin</keyword>
<keyword id="KW-0629">Postsynaptic neurotoxin</keyword>
<keyword id="KW-0964">Secreted</keyword>
<keyword id="KW-0800">Toxin</keyword>
<protein>
    <recommendedName>
        <fullName>Long neurotoxin 1</fullName>
    </recommendedName>
    <alternativeName>
        <fullName evidence="3">Neurotoxin alpha</fullName>
    </alternativeName>
</protein>
<sequence>IRCFITPDVTSQACPDGHVCYTKMWCDNFCGMRGKRVDLGCAATCPKVKPGVNIKCCSRDNCNPFPTRKRS</sequence>
<organism>
    <name type="scientific">Naja nivea</name>
    <name type="common">Cape cobra</name>
    <name type="synonym">Coluber niveus</name>
    <dbReference type="NCBI Taxonomy" id="8655"/>
    <lineage>
        <taxon>Eukaryota</taxon>
        <taxon>Metazoa</taxon>
        <taxon>Chordata</taxon>
        <taxon>Craniata</taxon>
        <taxon>Vertebrata</taxon>
        <taxon>Euteleostomi</taxon>
        <taxon>Lepidosauria</taxon>
        <taxon>Squamata</taxon>
        <taxon>Bifurcata</taxon>
        <taxon>Unidentata</taxon>
        <taxon>Episquamata</taxon>
        <taxon>Toxicofera</taxon>
        <taxon>Serpentes</taxon>
        <taxon>Colubroidea</taxon>
        <taxon>Elapidae</taxon>
        <taxon>Elapinae</taxon>
        <taxon>Naja</taxon>
    </lineage>
</organism>
<evidence type="ECO:0000250" key="1">
    <source>
        <dbReference type="UniProtKB" id="P60615"/>
    </source>
</evidence>
<evidence type="ECO:0000269" key="2">
    <source>
    </source>
</evidence>
<evidence type="ECO:0000303" key="3">
    <source>
    </source>
</evidence>
<evidence type="ECO:0000305" key="4"/>
<evidence type="ECO:0000305" key="5">
    <source>
    </source>
</evidence>
<evidence type="ECO:0007829" key="6">
    <source>
        <dbReference type="PDB" id="8D9Z"/>
    </source>
</evidence>
<comment type="function">
    <text evidence="1">Binds with high affinity to muscular (alpha-1/CHRNA1) and neuronal (alpha-7/CHRNA7) nicotinic acetylcholine receptor (nAChR) and inhibits acetylcholine from binding to the receptor, thereby impairing neuromuscular and neuronal transmission.</text>
</comment>
<comment type="subcellular location">
    <subcellularLocation>
        <location evidence="2">Secreted</location>
    </subcellularLocation>
</comment>
<comment type="tissue specificity">
    <text evidence="5">Expressed by the venom gland.</text>
</comment>
<comment type="toxic dose">
    <text evidence="2">LD(50) is 0.076 mg/kg by subcutaneous injection.</text>
</comment>
<comment type="similarity">
    <text evidence="4">Belongs to the three-finger toxin family. Long-chain subfamily. Type II alpha-neurotoxin sub-subfamily.</text>
</comment>
<name>3L21_NAJNI</name>
<reference key="1">
    <citation type="journal article" date="1971" name="J. Biol. Chem.">
        <title>Snake venom toxins. The amino acid sequences of toxins alpha and beta from Naja nivea venom and the disulfide bonds of toxin alpha.</title>
        <authorList>
            <person name="Botes D.P."/>
        </authorList>
    </citation>
    <scope>PROTEIN SEQUENCE</scope>
    <scope>TOXIC DOSE</scope>
    <scope>SUBCELLULAR LOCATION</scope>
    <scope>DISULFIDE BOND</scope>
    <source>
        <tissue>Venom</tissue>
    </source>
</reference>
<reference key="2">
    <citation type="journal article" date="2013" name="Proc. Natl. Acad. Sci. U.S.A.">
        <title>The king cobra genome reveals dynamic gene evolution and adaptation in the snake venom system.</title>
        <authorList>
            <person name="Vonk F.J."/>
            <person name="Casewell N.R."/>
            <person name="Henkel C.V."/>
            <person name="Heimberg A.M."/>
            <person name="Jansen H.J."/>
            <person name="McCleary R.J."/>
            <person name="Kerkkamp H.M."/>
            <person name="Vos R.A."/>
            <person name="Guerreiro I."/>
            <person name="Calvete J.J."/>
            <person name="Wuster W."/>
            <person name="Woods A.E."/>
            <person name="Logan J.M."/>
            <person name="Harrison R.A."/>
            <person name="Castoe T.A."/>
            <person name="de Koning A.P."/>
            <person name="Pollock D.D."/>
            <person name="Yandell M."/>
            <person name="Calderon D."/>
            <person name="Renjifo C."/>
            <person name="Currier R.B."/>
            <person name="Salgado D."/>
            <person name="Pla D."/>
            <person name="Sanz L."/>
            <person name="Hyder A.S."/>
            <person name="Ribeiro J.M."/>
            <person name="Arntzen J.W."/>
            <person name="van den Thillart G.E."/>
            <person name="Boetzer M."/>
            <person name="Pirovano W."/>
            <person name="Dirks R.P."/>
            <person name="Spaink H.P."/>
            <person name="Duboule D."/>
            <person name="McGlinn E."/>
            <person name="Kini R.M."/>
            <person name="Richardson M.K."/>
        </authorList>
    </citation>
    <scope>IDENTIFICATION BY MASS SPECTROMETRY</scope>
    <source>
        <tissue>Venom</tissue>
    </source>
</reference>
<proteinExistence type="evidence at protein level"/>
<dbReference type="PIR" id="A01661">
    <property type="entry name" value="N2NJ1C"/>
</dbReference>
<dbReference type="PDB" id="8D9Z">
    <property type="method" value="X-ray"/>
    <property type="resolution" value="1.80 A"/>
    <property type="chains" value="D=1-71"/>
</dbReference>
<dbReference type="PDBsum" id="8D9Z"/>
<dbReference type="SMR" id="P01390"/>
<dbReference type="GO" id="GO:0005576">
    <property type="term" value="C:extracellular region"/>
    <property type="evidence" value="ECO:0007669"/>
    <property type="project" value="UniProtKB-SubCell"/>
</dbReference>
<dbReference type="GO" id="GO:0030550">
    <property type="term" value="F:acetylcholine receptor inhibitor activity"/>
    <property type="evidence" value="ECO:0007669"/>
    <property type="project" value="UniProtKB-KW"/>
</dbReference>
<dbReference type="GO" id="GO:0099106">
    <property type="term" value="F:ion channel regulator activity"/>
    <property type="evidence" value="ECO:0007669"/>
    <property type="project" value="UniProtKB-KW"/>
</dbReference>
<dbReference type="GO" id="GO:0090729">
    <property type="term" value="F:toxin activity"/>
    <property type="evidence" value="ECO:0007669"/>
    <property type="project" value="UniProtKB-KW"/>
</dbReference>
<dbReference type="CDD" id="cd00206">
    <property type="entry name" value="TFP_snake_toxin"/>
    <property type="match status" value="1"/>
</dbReference>
<dbReference type="Gene3D" id="2.10.60.10">
    <property type="entry name" value="CD59"/>
    <property type="match status" value="1"/>
</dbReference>
<dbReference type="InterPro" id="IPR003571">
    <property type="entry name" value="Snake_3FTx"/>
</dbReference>
<dbReference type="InterPro" id="IPR045860">
    <property type="entry name" value="Snake_toxin-like_sf"/>
</dbReference>
<dbReference type="InterPro" id="IPR018354">
    <property type="entry name" value="Snake_toxin_con_site"/>
</dbReference>
<dbReference type="InterPro" id="IPR054131">
    <property type="entry name" value="Toxin_cobra-type"/>
</dbReference>
<dbReference type="Pfam" id="PF21947">
    <property type="entry name" value="Toxin_cobra-type"/>
    <property type="match status" value="1"/>
</dbReference>
<dbReference type="SUPFAM" id="SSF57302">
    <property type="entry name" value="Snake toxin-like"/>
    <property type="match status" value="1"/>
</dbReference>
<dbReference type="PROSITE" id="PS00272">
    <property type="entry name" value="SNAKE_TOXIN"/>
    <property type="match status" value="1"/>
</dbReference>